<sequence length="209" mass="23381">MNANTVLPPGLLLVLSAPSGAGKTTLAHRLLKETPDAVFSISVTTRRPRGKEREGVDYNFVDVATFQSKIERGEFVEWAEVYGHFYGSPQSVVDEARARKSAAIFDIDVQGGQAIKRKHPDAVTIFVLPPSMEELERRLRDRQTDSDETIRRRMLAARSEIERGIASYDYVVVNDDFERAFSDLRSVVVAERCRRERVDVSKLGLGIGG</sequence>
<protein>
    <recommendedName>
        <fullName evidence="1">Guanylate kinase</fullName>
        <ecNumber evidence="1">2.7.4.8</ecNumber>
    </recommendedName>
    <alternativeName>
        <fullName evidence="1">GMP kinase</fullName>
    </alternativeName>
</protein>
<accession>Q1D3A6</accession>
<proteinExistence type="inferred from homology"/>
<evidence type="ECO:0000255" key="1">
    <source>
        <dbReference type="HAMAP-Rule" id="MF_00328"/>
    </source>
</evidence>
<feature type="chain" id="PRO_0000266355" description="Guanylate kinase">
    <location>
        <begin position="1"/>
        <end position="209"/>
    </location>
</feature>
<feature type="domain" description="Guanylate kinase-like" evidence="1">
    <location>
        <begin position="10"/>
        <end position="189"/>
    </location>
</feature>
<feature type="binding site" evidence="1">
    <location>
        <begin position="17"/>
        <end position="24"/>
    </location>
    <ligand>
        <name>ATP</name>
        <dbReference type="ChEBI" id="CHEBI:30616"/>
    </ligand>
</feature>
<gene>
    <name evidence="1" type="primary">gmk</name>
    <name type="ordered locus">MXAN_4705</name>
</gene>
<name>KGUA_MYXXD</name>
<keyword id="KW-0067">ATP-binding</keyword>
<keyword id="KW-0963">Cytoplasm</keyword>
<keyword id="KW-0418">Kinase</keyword>
<keyword id="KW-0547">Nucleotide-binding</keyword>
<keyword id="KW-1185">Reference proteome</keyword>
<keyword id="KW-0808">Transferase</keyword>
<organism>
    <name type="scientific">Myxococcus xanthus (strain DK1622)</name>
    <dbReference type="NCBI Taxonomy" id="246197"/>
    <lineage>
        <taxon>Bacteria</taxon>
        <taxon>Pseudomonadati</taxon>
        <taxon>Myxococcota</taxon>
        <taxon>Myxococcia</taxon>
        <taxon>Myxococcales</taxon>
        <taxon>Cystobacterineae</taxon>
        <taxon>Myxococcaceae</taxon>
        <taxon>Myxococcus</taxon>
    </lineage>
</organism>
<reference key="1">
    <citation type="journal article" date="2006" name="Proc. Natl. Acad. Sci. U.S.A.">
        <title>Evolution of sensory complexity recorded in a myxobacterial genome.</title>
        <authorList>
            <person name="Goldman B.S."/>
            <person name="Nierman W.C."/>
            <person name="Kaiser D."/>
            <person name="Slater S.C."/>
            <person name="Durkin A.S."/>
            <person name="Eisen J.A."/>
            <person name="Ronning C.M."/>
            <person name="Barbazuk W.B."/>
            <person name="Blanchard M."/>
            <person name="Field C."/>
            <person name="Halling C."/>
            <person name="Hinkle G."/>
            <person name="Iartchuk O."/>
            <person name="Kim H.S."/>
            <person name="Mackenzie C."/>
            <person name="Madupu R."/>
            <person name="Miller N."/>
            <person name="Shvartsbeyn A."/>
            <person name="Sullivan S.A."/>
            <person name="Vaudin M."/>
            <person name="Wiegand R."/>
            <person name="Kaplan H.B."/>
        </authorList>
    </citation>
    <scope>NUCLEOTIDE SEQUENCE [LARGE SCALE GENOMIC DNA]</scope>
    <source>
        <strain>DK1622</strain>
    </source>
</reference>
<dbReference type="EC" id="2.7.4.8" evidence="1"/>
<dbReference type="EMBL" id="CP000113">
    <property type="protein sequence ID" value="ABF92632.1"/>
    <property type="molecule type" value="Genomic_DNA"/>
</dbReference>
<dbReference type="RefSeq" id="WP_011554692.1">
    <property type="nucleotide sequence ID" value="NC_008095.1"/>
</dbReference>
<dbReference type="SMR" id="Q1D3A6"/>
<dbReference type="STRING" id="246197.MXAN_4705"/>
<dbReference type="EnsemblBacteria" id="ABF92632">
    <property type="protein sequence ID" value="ABF92632"/>
    <property type="gene ID" value="MXAN_4705"/>
</dbReference>
<dbReference type="GeneID" id="41362005"/>
<dbReference type="KEGG" id="mxa:MXAN_4705"/>
<dbReference type="eggNOG" id="COG0194">
    <property type="taxonomic scope" value="Bacteria"/>
</dbReference>
<dbReference type="HOGENOM" id="CLU_001715_1_2_7"/>
<dbReference type="OrthoDB" id="9808150at2"/>
<dbReference type="Proteomes" id="UP000002402">
    <property type="component" value="Chromosome"/>
</dbReference>
<dbReference type="GO" id="GO:0005829">
    <property type="term" value="C:cytosol"/>
    <property type="evidence" value="ECO:0007669"/>
    <property type="project" value="TreeGrafter"/>
</dbReference>
<dbReference type="GO" id="GO:0005524">
    <property type="term" value="F:ATP binding"/>
    <property type="evidence" value="ECO:0007669"/>
    <property type="project" value="UniProtKB-UniRule"/>
</dbReference>
<dbReference type="GO" id="GO:0004385">
    <property type="term" value="F:guanylate kinase activity"/>
    <property type="evidence" value="ECO:0007669"/>
    <property type="project" value="UniProtKB-UniRule"/>
</dbReference>
<dbReference type="CDD" id="cd00071">
    <property type="entry name" value="GMPK"/>
    <property type="match status" value="1"/>
</dbReference>
<dbReference type="FunFam" id="3.30.63.10:FF:000005">
    <property type="entry name" value="Guanylate kinase"/>
    <property type="match status" value="1"/>
</dbReference>
<dbReference type="Gene3D" id="3.30.63.10">
    <property type="entry name" value="Guanylate Kinase phosphate binding domain"/>
    <property type="match status" value="1"/>
</dbReference>
<dbReference type="Gene3D" id="3.40.50.300">
    <property type="entry name" value="P-loop containing nucleotide triphosphate hydrolases"/>
    <property type="match status" value="1"/>
</dbReference>
<dbReference type="HAMAP" id="MF_00328">
    <property type="entry name" value="Guanylate_kinase"/>
    <property type="match status" value="1"/>
</dbReference>
<dbReference type="InterPro" id="IPR008145">
    <property type="entry name" value="GK/Ca_channel_bsu"/>
</dbReference>
<dbReference type="InterPro" id="IPR008144">
    <property type="entry name" value="Guanylate_kin-like_dom"/>
</dbReference>
<dbReference type="InterPro" id="IPR017665">
    <property type="entry name" value="Guanylate_kinase"/>
</dbReference>
<dbReference type="InterPro" id="IPR020590">
    <property type="entry name" value="Guanylate_kinase_CS"/>
</dbReference>
<dbReference type="InterPro" id="IPR027417">
    <property type="entry name" value="P-loop_NTPase"/>
</dbReference>
<dbReference type="NCBIfam" id="TIGR03263">
    <property type="entry name" value="guanyl_kin"/>
    <property type="match status" value="1"/>
</dbReference>
<dbReference type="PANTHER" id="PTHR23117:SF13">
    <property type="entry name" value="GUANYLATE KINASE"/>
    <property type="match status" value="1"/>
</dbReference>
<dbReference type="PANTHER" id="PTHR23117">
    <property type="entry name" value="GUANYLATE KINASE-RELATED"/>
    <property type="match status" value="1"/>
</dbReference>
<dbReference type="Pfam" id="PF00625">
    <property type="entry name" value="Guanylate_kin"/>
    <property type="match status" value="1"/>
</dbReference>
<dbReference type="SMART" id="SM00072">
    <property type="entry name" value="GuKc"/>
    <property type="match status" value="1"/>
</dbReference>
<dbReference type="SUPFAM" id="SSF52540">
    <property type="entry name" value="P-loop containing nucleoside triphosphate hydrolases"/>
    <property type="match status" value="1"/>
</dbReference>
<dbReference type="PROSITE" id="PS00856">
    <property type="entry name" value="GUANYLATE_KINASE_1"/>
    <property type="match status" value="1"/>
</dbReference>
<dbReference type="PROSITE" id="PS50052">
    <property type="entry name" value="GUANYLATE_KINASE_2"/>
    <property type="match status" value="1"/>
</dbReference>
<comment type="function">
    <text evidence="1">Essential for recycling GMP and indirectly, cGMP.</text>
</comment>
<comment type="catalytic activity">
    <reaction evidence="1">
        <text>GMP + ATP = GDP + ADP</text>
        <dbReference type="Rhea" id="RHEA:20780"/>
        <dbReference type="ChEBI" id="CHEBI:30616"/>
        <dbReference type="ChEBI" id="CHEBI:58115"/>
        <dbReference type="ChEBI" id="CHEBI:58189"/>
        <dbReference type="ChEBI" id="CHEBI:456216"/>
        <dbReference type="EC" id="2.7.4.8"/>
    </reaction>
</comment>
<comment type="subcellular location">
    <subcellularLocation>
        <location evidence="1">Cytoplasm</location>
    </subcellularLocation>
</comment>
<comment type="similarity">
    <text evidence="1">Belongs to the guanylate kinase family.</text>
</comment>